<gene>
    <name type="primary">RAD54B</name>
</gene>
<name>RA54B_HUMAN</name>
<evidence type="ECO:0000255" key="1">
    <source>
        <dbReference type="PROSITE-ProRule" id="PRU00541"/>
    </source>
</evidence>
<evidence type="ECO:0000255" key="2">
    <source>
        <dbReference type="PROSITE-ProRule" id="PRU00542"/>
    </source>
</evidence>
<evidence type="ECO:0000256" key="3">
    <source>
        <dbReference type="SAM" id="MobiDB-lite"/>
    </source>
</evidence>
<evidence type="ECO:0000269" key="4">
    <source>
    </source>
</evidence>
<evidence type="ECO:0000269" key="5">
    <source>
    </source>
</evidence>
<evidence type="ECO:0000269" key="6">
    <source>
    </source>
</evidence>
<evidence type="ECO:0000269" key="7">
    <source>
    </source>
</evidence>
<evidence type="ECO:0000269" key="8">
    <source>
    </source>
</evidence>
<evidence type="ECO:0000303" key="9">
    <source ref="2"/>
</evidence>
<evidence type="ECO:0000305" key="10"/>
<evidence type="ECO:0007744" key="11">
    <source>
    </source>
</evidence>
<protein>
    <recommendedName>
        <fullName>DNA repair and recombination protein RAD54B</fullName>
        <ecNumber>3.6.4.-</ecNumber>
    </recommendedName>
    <alternativeName>
        <fullName>RAD54 homolog B</fullName>
    </alternativeName>
</protein>
<feature type="chain" id="PRO_0000074340" description="DNA repair and recombination protein RAD54B">
    <location>
        <begin position="1"/>
        <end position="910"/>
    </location>
</feature>
<feature type="domain" description="Helicase ATP-binding" evidence="1">
    <location>
        <begin position="313"/>
        <end position="480"/>
    </location>
</feature>
<feature type="domain" description="Helicase C-terminal" evidence="2">
    <location>
        <begin position="649"/>
        <end position="810"/>
    </location>
</feature>
<feature type="region of interest" description="Disordered" evidence="3">
    <location>
        <begin position="1"/>
        <end position="33"/>
    </location>
</feature>
<feature type="short sequence motif" description="DEGH box">
    <location>
        <begin position="431"/>
        <end position="434"/>
    </location>
</feature>
<feature type="compositionally biased region" description="Polar residues" evidence="3">
    <location>
        <begin position="1"/>
        <end position="14"/>
    </location>
</feature>
<feature type="binding site" evidence="1">
    <location>
        <begin position="326"/>
        <end position="333"/>
    </location>
    <ligand>
        <name>ATP</name>
        <dbReference type="ChEBI" id="CHEBI:30616"/>
    </ligand>
</feature>
<feature type="modified residue" description="Phosphoserine" evidence="11">
    <location>
        <position position="14"/>
    </location>
</feature>
<feature type="splice variant" id="VSP_045956" description="In isoform 2." evidence="9">
    <original>HSAPKEVAVSKEQEE</original>
    <variation>QTWMRRHRLVPVHYR</variation>
    <location>
        <begin position="103"/>
        <end position="117"/>
    </location>
</feature>
<feature type="splice variant" id="VSP_045957" description="In isoform 2." evidence="9">
    <location>
        <begin position="118"/>
        <end position="910"/>
    </location>
</feature>
<feature type="sequence variant" id="VAR_034430" description="In dbSNP:rs28910279.">
    <original>L</original>
    <variation>V</variation>
    <location>
        <position position="30"/>
    </location>
</feature>
<feature type="sequence variant" id="VAR_037885" description="In dbSNP:rs2919661.">
    <original>D</original>
    <variation>H</variation>
    <location>
        <position position="97"/>
    </location>
</feature>
<feature type="sequence variant" id="VAR_019563" description="In a colon cancer sample; dbSNP:rs119490107." evidence="4">
    <original>D</original>
    <variation>Y</variation>
    <location>
        <position position="418"/>
    </location>
</feature>
<feature type="sequence variant" id="VAR_019564" description="In a non-Hodgkin lymphoma sample; dbSNP:rs114216685." evidence="4">
    <original>N</original>
    <variation>S</variation>
    <location>
        <position position="593"/>
    </location>
</feature>
<feature type="sequence variant" id="VAR_075089" description="In dbSNP:rs752511501." evidence="8">
    <original>G</original>
    <variation>E</variation>
    <location>
        <position position="833"/>
    </location>
</feature>
<feature type="sequence variant" id="VAR_075090" description="In dbSNP:rs150017319." evidence="8">
    <original>I</original>
    <variation>V</variation>
    <location>
        <position position="899"/>
    </location>
</feature>
<sequence length="910" mass="102967">MRRSAAPSQLQGNSFKKPKFIPPGRSNPGLNEEITKLNPDIKLFEGVAINNTFLPSQNDLRICSLNLPSEESTREINNRDNCSGKYCFEAPTLATLDPPHTVHSAPKEVAVSKEQEEKSDSLVKYFSVVWCKPSKKKHKKWEGDAVLIVKGKSFILKNLEGKDIGRGIGYKFKELEKIEEGQTLMICGKEIEVMGVISPDDFSSGRCFQLGGGSTAISHSSQVARKCFSNPFKSVCKPSSKENRQNDFQNCKPRHDPYTPNSLVMPRPDKNHQWVFNKNCFPLVDVVIDPYLVYHLRPHQKEGIIFLYECVMGMRMNGRCGAILADEMGLGKTLQCISLIWTLQCQGPYGGKPVIKKTLIVTPGSLVNNWKKEFQKWLGSERIKIFTVDQDHKVEEFIKSIFYSVLIISYEMLLRSLDQIKNIKFDLLICDEGHRLKNSAIKTTTALISLSCEKRIILTGTPIQNDLQEFFALIDFVNPGILGSLSSYRKIYEEPIILSREPSASEEEKELGERRAAELTCLTGLFILRRTQEIINKYLPPKIENVVFCRPGALQIELYRKLLNSQVVRFCLQGLLENSPHLICIGALKKLCNHPCLLFNSIKEKECSSTCDKNEEKSLYKGLLSVFPADYNPLLFTEKESGKLQVLSKLLAVIHELRPTEKVVLVSNYTQTLNILQEVCKRHGYAYTRLDGQTPISQRQQIVDGFNSQHSSFFIFLLSSKAGGVGLNLIGGSHLILYDIDWNPATDIQAMSRVWRDGQKYPVHIYRLLTTGTIEEKIYQRQISKQGLCGAVVDLTKTSEHIQFSVEELKNLFTLHESSDCVTHDLLDCECTGEEVHTGDSLEKFIVSRDCQLGPHHQKSNSLKPLSMSQLKQWKHFSGDHLNLTDPFLERITENVSFIFQNITTQATGT</sequence>
<comment type="function">
    <text evidence="6 7">Involved in DNA repair and mitotic recombination. May play an active role in recombination processes in concert with other members of the RAD52 epistasis group.</text>
</comment>
<comment type="subunit">
    <text evidence="5">Interacts with RAD51 through the NH2-terminal domain. Immunoprecipitation experiments show that the interaction is constitutive and not induced by ionizing radiation. The interaction may be indirect.</text>
</comment>
<comment type="interaction">
    <interactant intactId="EBI-740830">
        <id>Q9Y620</id>
    </interactant>
    <interactant intactId="EBI-930964">
        <id>P54253</id>
        <label>ATXN1</label>
    </interactant>
    <organismsDiffer>false</organismsDiffer>
    <experiments>3</experiments>
</comment>
<comment type="interaction">
    <interactant intactId="EBI-740830">
        <id>Q9Y620</id>
    </interactant>
    <interactant intactId="EBI-739832">
        <id>Q8TBB1</id>
        <label>LNX1</label>
    </interactant>
    <organismsDiffer>false</organismsDiffer>
    <experiments>4</experiments>
</comment>
<comment type="subcellular location">
    <subcellularLocation>
        <location evidence="10">Nucleus</location>
    </subcellularLocation>
</comment>
<comment type="alternative products">
    <event type="alternative splicing"/>
    <isoform>
        <id>Q9Y620-1</id>
        <name>1</name>
        <sequence type="displayed"/>
    </isoform>
    <isoform>
        <id>Q9Y620-2</id>
        <name>2</name>
        <sequence type="described" ref="VSP_045956 VSP_045957"/>
    </isoform>
</comment>
<comment type="tissue specificity">
    <text evidence="4">Abundantly expressed in testis and spleen. Relatively low levels observed in thymus, prostate, ovary and colon.</text>
</comment>
<comment type="similarity">
    <text evidence="10">Belongs to the SNF2/RAD54 helicase family.</text>
</comment>
<accession>Q9Y620</accession>
<accession>F6WBS8</accession>
<proteinExistence type="evidence at protein level"/>
<reference key="1">
    <citation type="journal article" date="1999" name="Oncogene">
        <title>Mutations of a novel human RAD54 homologue, RAD54B, in primary cancer.</title>
        <authorList>
            <person name="Hiramoto T."/>
            <person name="Nakanishi T."/>
            <person name="Sumiyoshi T."/>
            <person name="Fukuda T."/>
            <person name="Matsuura S."/>
            <person name="Tauchi H."/>
            <person name="Komatsu K."/>
            <person name="Shibasaki Y."/>
            <person name="Inui H."/>
            <person name="Watatani M."/>
            <person name="Yasutomi M."/>
            <person name="Sumii K."/>
            <person name="Kajiyama G."/>
            <person name="Kamada N."/>
            <person name="Miyagawa K."/>
            <person name="Kamiya K."/>
        </authorList>
    </citation>
    <scope>NUCLEOTIDE SEQUENCE [MRNA] (ISOFORM 1)</scope>
    <scope>TISSUE SPECIFICITY</scope>
    <scope>VARIANTS TYR-418 AND SER-593</scope>
</reference>
<reference key="2">
    <citation type="submission" date="2003-01" db="EMBL/GenBank/DDBJ databases">
        <title>Full-length cDNA libraries and normalization.</title>
        <authorList>
            <person name="Li W.B."/>
            <person name="Gruber C."/>
            <person name="Jessee J."/>
            <person name="Polayes D."/>
        </authorList>
    </citation>
    <scope>NUCLEOTIDE SEQUENCE [LARGE SCALE MRNA] (ISOFORM 2)</scope>
    <source>
        <tissue>Neuroblastoma</tissue>
    </source>
</reference>
<reference key="3">
    <citation type="journal article" date="2006" name="Nature">
        <title>DNA sequence and analysis of human chromosome 8.</title>
        <authorList>
            <person name="Nusbaum C."/>
            <person name="Mikkelsen T.S."/>
            <person name="Zody M.C."/>
            <person name="Asakawa S."/>
            <person name="Taudien S."/>
            <person name="Garber M."/>
            <person name="Kodira C.D."/>
            <person name="Schueler M.G."/>
            <person name="Shimizu A."/>
            <person name="Whittaker C.A."/>
            <person name="Chang J.L."/>
            <person name="Cuomo C.A."/>
            <person name="Dewar K."/>
            <person name="FitzGerald M.G."/>
            <person name="Yang X."/>
            <person name="Allen N.R."/>
            <person name="Anderson S."/>
            <person name="Asakawa T."/>
            <person name="Blechschmidt K."/>
            <person name="Bloom T."/>
            <person name="Borowsky M.L."/>
            <person name="Butler J."/>
            <person name="Cook A."/>
            <person name="Corum B."/>
            <person name="DeArellano K."/>
            <person name="DeCaprio D."/>
            <person name="Dooley K.T."/>
            <person name="Dorris L. III"/>
            <person name="Engels R."/>
            <person name="Gloeckner G."/>
            <person name="Hafez N."/>
            <person name="Hagopian D.S."/>
            <person name="Hall J.L."/>
            <person name="Ishikawa S.K."/>
            <person name="Jaffe D.B."/>
            <person name="Kamat A."/>
            <person name="Kudoh J."/>
            <person name="Lehmann R."/>
            <person name="Lokitsang T."/>
            <person name="Macdonald P."/>
            <person name="Major J.E."/>
            <person name="Matthews C.D."/>
            <person name="Mauceli E."/>
            <person name="Menzel U."/>
            <person name="Mihalev A.H."/>
            <person name="Minoshima S."/>
            <person name="Murayama Y."/>
            <person name="Naylor J.W."/>
            <person name="Nicol R."/>
            <person name="Nguyen C."/>
            <person name="O'Leary S.B."/>
            <person name="O'Neill K."/>
            <person name="Parker S.C.J."/>
            <person name="Polley A."/>
            <person name="Raymond C.K."/>
            <person name="Reichwald K."/>
            <person name="Rodriguez J."/>
            <person name="Sasaki T."/>
            <person name="Schilhabel M."/>
            <person name="Siddiqui R."/>
            <person name="Smith C.L."/>
            <person name="Sneddon T.P."/>
            <person name="Talamas J.A."/>
            <person name="Tenzin P."/>
            <person name="Topham K."/>
            <person name="Venkataraman V."/>
            <person name="Wen G."/>
            <person name="Yamazaki S."/>
            <person name="Young S.K."/>
            <person name="Zeng Q."/>
            <person name="Zimmer A.R."/>
            <person name="Rosenthal A."/>
            <person name="Birren B.W."/>
            <person name="Platzer M."/>
            <person name="Shimizu N."/>
            <person name="Lander E.S."/>
        </authorList>
    </citation>
    <scope>NUCLEOTIDE SEQUENCE [LARGE SCALE GENOMIC DNA]</scope>
</reference>
<reference key="4">
    <citation type="journal article" date="2004" name="Genome Res.">
        <title>The status, quality, and expansion of the NIH full-length cDNA project: the Mammalian Gene Collection (MGC).</title>
        <authorList>
            <consortium name="The MGC Project Team"/>
        </authorList>
    </citation>
    <scope>NUCLEOTIDE SEQUENCE [LARGE SCALE MRNA] (ISOFORM 1)</scope>
    <source>
        <tissue>Placenta</tissue>
    </source>
</reference>
<reference key="5">
    <citation type="journal article" date="2000" name="J. Biol. Chem.">
        <title>A novel human Rad54 homologue, Rad54B, associates with Rad51.</title>
        <authorList>
            <person name="Tanaka K."/>
            <person name="Hiramoto T."/>
            <person name="Fukuda T."/>
            <person name="Miyagawa K."/>
        </authorList>
    </citation>
    <scope>INTERACTION WITH RAD51</scope>
</reference>
<reference key="6">
    <citation type="journal article" date="2002" name="EMBO J.">
        <title>A role for RAD54B in homologous recombination in human cells.</title>
        <authorList>
            <person name="Miyagawa K."/>
            <person name="Tsuruga T."/>
            <person name="Kinomura A."/>
            <person name="Usui K."/>
            <person name="Katsura M."/>
            <person name="Tashiro S."/>
            <person name="Mishima H."/>
            <person name="Tanaka K."/>
        </authorList>
    </citation>
    <scope>FUNCTION</scope>
</reference>
<reference key="7">
    <citation type="journal article" date="2002" name="Nucleic Acids Res.">
        <title>Human Rad54B is a double-stranded DNA-dependent ATPase and has biochemical properties different from its structural homolog in yeast, Tid1/Rdh54.</title>
        <authorList>
            <person name="Tanaka K."/>
            <person name="Kagawa W."/>
            <person name="Kinebuchi T."/>
            <person name="Kurumizaka H."/>
            <person name="Miyagawa K."/>
        </authorList>
    </citation>
    <scope>FUNCTION</scope>
    <scope>CHARACTERIZATION</scope>
</reference>
<reference key="8">
    <citation type="journal article" date="2013" name="J. Proteome Res.">
        <title>Toward a comprehensive characterization of a human cancer cell phosphoproteome.</title>
        <authorList>
            <person name="Zhou H."/>
            <person name="Di Palma S."/>
            <person name="Preisinger C."/>
            <person name="Peng M."/>
            <person name="Polat A.N."/>
            <person name="Heck A.J."/>
            <person name="Mohammed S."/>
        </authorList>
    </citation>
    <scope>PHOSPHORYLATION [LARGE SCALE ANALYSIS] AT SER-14</scope>
    <scope>IDENTIFICATION BY MASS SPECTROMETRY [LARGE SCALE ANALYSIS]</scope>
    <source>
        <tissue>Cervix carcinoma</tissue>
        <tissue>Erythroleukemia</tissue>
    </source>
</reference>
<reference key="9">
    <citation type="journal article" date="2015" name="Clin. Genet.">
        <title>A homozygous mutation in SLC1A4 in siblings with severe intellectual disability and microcephaly.</title>
        <authorList>
            <person name="Srour M."/>
            <person name="Hamdan F.F."/>
            <person name="Gan-Or Z."/>
            <person name="Labuda D."/>
            <person name="Nassif C."/>
            <person name="Oskoui M."/>
            <person name="Gana-Weisz M."/>
            <person name="Orr-Urtreger A."/>
            <person name="Rouleau G.A."/>
            <person name="Michaud J.L."/>
        </authorList>
    </citation>
    <scope>VARIANTS GLU-833 AND VAL-899</scope>
</reference>
<keyword id="KW-0025">Alternative splicing</keyword>
<keyword id="KW-0067">ATP-binding</keyword>
<keyword id="KW-0227">DNA damage</keyword>
<keyword id="KW-0234">DNA repair</keyword>
<keyword id="KW-0238">DNA-binding</keyword>
<keyword id="KW-0347">Helicase</keyword>
<keyword id="KW-0378">Hydrolase</keyword>
<keyword id="KW-0547">Nucleotide-binding</keyword>
<keyword id="KW-0539">Nucleus</keyword>
<keyword id="KW-0597">Phosphoprotein</keyword>
<keyword id="KW-1267">Proteomics identification</keyword>
<keyword id="KW-1185">Reference proteome</keyword>
<organism>
    <name type="scientific">Homo sapiens</name>
    <name type="common">Human</name>
    <dbReference type="NCBI Taxonomy" id="9606"/>
    <lineage>
        <taxon>Eukaryota</taxon>
        <taxon>Metazoa</taxon>
        <taxon>Chordata</taxon>
        <taxon>Craniata</taxon>
        <taxon>Vertebrata</taxon>
        <taxon>Euteleostomi</taxon>
        <taxon>Mammalia</taxon>
        <taxon>Eutheria</taxon>
        <taxon>Euarchontoglires</taxon>
        <taxon>Primates</taxon>
        <taxon>Haplorrhini</taxon>
        <taxon>Catarrhini</taxon>
        <taxon>Hominidae</taxon>
        <taxon>Homo</taxon>
    </lineage>
</organism>
<dbReference type="EC" id="3.6.4.-"/>
<dbReference type="EMBL" id="AF112481">
    <property type="protein sequence ID" value="AAD34331.1"/>
    <property type="molecule type" value="mRNA"/>
</dbReference>
<dbReference type="EMBL" id="AL523600">
    <property type="status" value="NOT_ANNOTATED_CDS"/>
    <property type="molecule type" value="mRNA"/>
</dbReference>
<dbReference type="EMBL" id="AC023632">
    <property type="status" value="NOT_ANNOTATED_CDS"/>
    <property type="molecule type" value="Genomic_DNA"/>
</dbReference>
<dbReference type="EMBL" id="AP003534">
    <property type="status" value="NOT_ANNOTATED_CDS"/>
    <property type="molecule type" value="Genomic_DNA"/>
</dbReference>
<dbReference type="EMBL" id="BC001965">
    <property type="protein sequence ID" value="AAH01965.1"/>
    <property type="molecule type" value="mRNA"/>
</dbReference>
<dbReference type="CCDS" id="CCDS56546.1">
    <molecule id="Q9Y620-2"/>
</dbReference>
<dbReference type="CCDS" id="CCDS6262.1">
    <molecule id="Q9Y620-1"/>
</dbReference>
<dbReference type="RefSeq" id="NP_001192191.1">
    <molecule id="Q9Y620-2"/>
    <property type="nucleotide sequence ID" value="NM_001205262.3"/>
</dbReference>
<dbReference type="RefSeq" id="NP_001192192.1">
    <property type="nucleotide sequence ID" value="NM_001205263.1"/>
</dbReference>
<dbReference type="RefSeq" id="NP_036547.1">
    <molecule id="Q9Y620-1"/>
    <property type="nucleotide sequence ID" value="NM_012415.3"/>
</dbReference>
<dbReference type="SMR" id="Q9Y620"/>
<dbReference type="BioGRID" id="117321">
    <property type="interactions" value="56"/>
</dbReference>
<dbReference type="FunCoup" id="Q9Y620">
    <property type="interactions" value="1067"/>
</dbReference>
<dbReference type="IntAct" id="Q9Y620">
    <property type="interactions" value="20"/>
</dbReference>
<dbReference type="MINT" id="Q9Y620"/>
<dbReference type="STRING" id="9606.ENSP00000336606"/>
<dbReference type="GlyGen" id="Q9Y620">
    <property type="glycosylation" value="1 site, 1 O-linked glycan (1 site)"/>
</dbReference>
<dbReference type="iPTMnet" id="Q9Y620"/>
<dbReference type="PhosphoSitePlus" id="Q9Y620"/>
<dbReference type="BioMuta" id="RAD54B"/>
<dbReference type="DMDM" id="51316548"/>
<dbReference type="jPOST" id="Q9Y620"/>
<dbReference type="MassIVE" id="Q9Y620"/>
<dbReference type="PaxDb" id="9606-ENSP00000336606"/>
<dbReference type="PeptideAtlas" id="Q9Y620"/>
<dbReference type="ProteomicsDB" id="28103"/>
<dbReference type="ProteomicsDB" id="86588">
    <molecule id="Q9Y620-1"/>
</dbReference>
<dbReference type="Pumba" id="Q9Y620"/>
<dbReference type="Antibodypedia" id="1882">
    <property type="antibodies" value="208 antibodies from 27 providers"/>
</dbReference>
<dbReference type="DNASU" id="25788"/>
<dbReference type="Ensembl" id="ENST00000297592.5">
    <molecule id="Q9Y620-2"/>
    <property type="protein sequence ID" value="ENSP00000430153.2"/>
    <property type="gene ID" value="ENSG00000197275.14"/>
</dbReference>
<dbReference type="Ensembl" id="ENST00000336148.10">
    <molecule id="Q9Y620-1"/>
    <property type="protein sequence ID" value="ENSP00000336606.5"/>
    <property type="gene ID" value="ENSG00000197275.14"/>
</dbReference>
<dbReference type="GeneID" id="25788"/>
<dbReference type="KEGG" id="hsa:25788"/>
<dbReference type="MANE-Select" id="ENST00000336148.10">
    <property type="protein sequence ID" value="ENSP00000336606.5"/>
    <property type="RefSeq nucleotide sequence ID" value="NM_012415.3"/>
    <property type="RefSeq protein sequence ID" value="NP_036547.1"/>
</dbReference>
<dbReference type="UCSC" id="uc003ygk.4">
    <molecule id="Q9Y620-1"/>
    <property type="organism name" value="human"/>
</dbReference>
<dbReference type="AGR" id="HGNC:17228"/>
<dbReference type="CTD" id="25788"/>
<dbReference type="DisGeNET" id="25788"/>
<dbReference type="GeneCards" id="RAD54B"/>
<dbReference type="HGNC" id="HGNC:17228">
    <property type="gene designation" value="RAD54B"/>
</dbReference>
<dbReference type="HPA" id="ENSG00000197275">
    <property type="expression patterns" value="Tissue enhanced (retina)"/>
</dbReference>
<dbReference type="MalaCards" id="RAD54B"/>
<dbReference type="MIM" id="604289">
    <property type="type" value="gene"/>
</dbReference>
<dbReference type="neXtProt" id="NX_Q9Y620"/>
<dbReference type="OpenTargets" id="ENSG00000197275"/>
<dbReference type="PharmGKB" id="PA134927202"/>
<dbReference type="VEuPathDB" id="HostDB:ENSG00000197275"/>
<dbReference type="eggNOG" id="KOG0390">
    <property type="taxonomic scope" value="Eukaryota"/>
</dbReference>
<dbReference type="GeneTree" id="ENSGT00940000156966"/>
<dbReference type="InParanoid" id="Q9Y620"/>
<dbReference type="OMA" id="KCQTHEL"/>
<dbReference type="OrthoDB" id="413460at2759"/>
<dbReference type="PAN-GO" id="Q9Y620">
    <property type="GO annotations" value="4 GO annotations based on evolutionary models"/>
</dbReference>
<dbReference type="PhylomeDB" id="Q9Y620"/>
<dbReference type="TreeFam" id="TF101223"/>
<dbReference type="BRENDA" id="3.6.4.B9">
    <property type="organism ID" value="2681"/>
</dbReference>
<dbReference type="PathwayCommons" id="Q9Y620"/>
<dbReference type="SignaLink" id="Q9Y620"/>
<dbReference type="BioGRID-ORCS" id="25788">
    <property type="hits" value="15 hits in 1156 CRISPR screens"/>
</dbReference>
<dbReference type="ChiTaRS" id="RAD54B">
    <property type="organism name" value="human"/>
</dbReference>
<dbReference type="GenomeRNAi" id="25788"/>
<dbReference type="Pharos" id="Q9Y620">
    <property type="development level" value="Tbio"/>
</dbReference>
<dbReference type="PRO" id="PR:Q9Y620"/>
<dbReference type="Proteomes" id="UP000005640">
    <property type="component" value="Chromosome 8"/>
</dbReference>
<dbReference type="RNAct" id="Q9Y620">
    <property type="molecule type" value="protein"/>
</dbReference>
<dbReference type="Bgee" id="ENSG00000197275">
    <property type="expression patterns" value="Expressed in right uterine tube and 129 other cell types or tissues"/>
</dbReference>
<dbReference type="ExpressionAtlas" id="Q9Y620">
    <property type="expression patterns" value="baseline and differential"/>
</dbReference>
<dbReference type="GO" id="GO:0005634">
    <property type="term" value="C:nucleus"/>
    <property type="evidence" value="ECO:0000318"/>
    <property type="project" value="GO_Central"/>
</dbReference>
<dbReference type="GO" id="GO:0005524">
    <property type="term" value="F:ATP binding"/>
    <property type="evidence" value="ECO:0007669"/>
    <property type="project" value="UniProtKB-KW"/>
</dbReference>
<dbReference type="GO" id="GO:0003677">
    <property type="term" value="F:DNA binding"/>
    <property type="evidence" value="ECO:0007669"/>
    <property type="project" value="UniProtKB-KW"/>
</dbReference>
<dbReference type="GO" id="GO:0003678">
    <property type="term" value="F:DNA helicase activity"/>
    <property type="evidence" value="ECO:0000304"/>
    <property type="project" value="ProtInc"/>
</dbReference>
<dbReference type="GO" id="GO:0015616">
    <property type="term" value="F:DNA translocase activity"/>
    <property type="evidence" value="ECO:0000314"/>
    <property type="project" value="MGI"/>
</dbReference>
<dbReference type="GO" id="GO:0016787">
    <property type="term" value="F:hydrolase activity"/>
    <property type="evidence" value="ECO:0007669"/>
    <property type="project" value="UniProtKB-KW"/>
</dbReference>
<dbReference type="GO" id="GO:0003724">
    <property type="term" value="F:RNA helicase activity"/>
    <property type="evidence" value="ECO:0000304"/>
    <property type="project" value="ProtInc"/>
</dbReference>
<dbReference type="GO" id="GO:0008340">
    <property type="term" value="P:determination of adult lifespan"/>
    <property type="evidence" value="ECO:0007669"/>
    <property type="project" value="Ensembl"/>
</dbReference>
<dbReference type="GO" id="GO:0000724">
    <property type="term" value="P:double-strand break repair via homologous recombination"/>
    <property type="evidence" value="ECO:0000314"/>
    <property type="project" value="MGI"/>
</dbReference>
<dbReference type="GO" id="GO:0006312">
    <property type="term" value="P:mitotic recombination"/>
    <property type="evidence" value="ECO:0000304"/>
    <property type="project" value="ProtInc"/>
</dbReference>
<dbReference type="GO" id="GO:0007131">
    <property type="term" value="P:reciprocal meiotic recombination"/>
    <property type="evidence" value="ECO:0000318"/>
    <property type="project" value="GO_Central"/>
</dbReference>
<dbReference type="GO" id="GO:0010212">
    <property type="term" value="P:response to ionizing radiation"/>
    <property type="evidence" value="ECO:0007669"/>
    <property type="project" value="Ensembl"/>
</dbReference>
<dbReference type="GO" id="GO:0009410">
    <property type="term" value="P:response to xenobiotic stimulus"/>
    <property type="evidence" value="ECO:0007669"/>
    <property type="project" value="Ensembl"/>
</dbReference>
<dbReference type="CDD" id="cd18066">
    <property type="entry name" value="DEXHc_RAD54B"/>
    <property type="match status" value="1"/>
</dbReference>
<dbReference type="CDD" id="cd18793">
    <property type="entry name" value="SF2_C_SNF"/>
    <property type="match status" value="1"/>
</dbReference>
<dbReference type="FunFam" id="3.40.50.300:FF:000332">
    <property type="entry name" value="DNA repair and recombination protein RAD54-like"/>
    <property type="match status" value="1"/>
</dbReference>
<dbReference type="FunFam" id="1.20.120.850:FF:000004">
    <property type="entry name" value="DNA repair and recombination protein RAD54B"/>
    <property type="match status" value="1"/>
</dbReference>
<dbReference type="FunFam" id="3.40.50.10810:FF:000020">
    <property type="entry name" value="DNA repair and recombination protein RAD54B"/>
    <property type="match status" value="1"/>
</dbReference>
<dbReference type="Gene3D" id="3.40.50.300">
    <property type="entry name" value="P-loop containing nucleotide triphosphate hydrolases"/>
    <property type="match status" value="1"/>
</dbReference>
<dbReference type="Gene3D" id="1.20.120.850">
    <property type="entry name" value="SWI2/SNF2 ATPases, N-terminal domain"/>
    <property type="match status" value="1"/>
</dbReference>
<dbReference type="Gene3D" id="3.40.50.10810">
    <property type="entry name" value="Tandem AAA-ATPase domain"/>
    <property type="match status" value="1"/>
</dbReference>
<dbReference type="InterPro" id="IPR014001">
    <property type="entry name" value="Helicase_ATP-bd"/>
</dbReference>
<dbReference type="InterPro" id="IPR001650">
    <property type="entry name" value="Helicase_C-like"/>
</dbReference>
<dbReference type="InterPro" id="IPR027417">
    <property type="entry name" value="P-loop_NTPase"/>
</dbReference>
<dbReference type="InterPro" id="IPR038718">
    <property type="entry name" value="SNF2-like_sf"/>
</dbReference>
<dbReference type="InterPro" id="IPR049730">
    <property type="entry name" value="SNF2/RAD54-like_C"/>
</dbReference>
<dbReference type="InterPro" id="IPR000330">
    <property type="entry name" value="SNF2_N"/>
</dbReference>
<dbReference type="InterPro" id="IPR050496">
    <property type="entry name" value="SNF2_RAD54_helicase_repair"/>
</dbReference>
<dbReference type="PANTHER" id="PTHR45629:SF7">
    <property type="entry name" value="DNA EXCISION REPAIR PROTEIN ERCC-6-RELATED"/>
    <property type="match status" value="1"/>
</dbReference>
<dbReference type="PANTHER" id="PTHR45629">
    <property type="entry name" value="SNF2/RAD54 FAMILY MEMBER"/>
    <property type="match status" value="1"/>
</dbReference>
<dbReference type="Pfam" id="PF00271">
    <property type="entry name" value="Helicase_C"/>
    <property type="match status" value="1"/>
</dbReference>
<dbReference type="Pfam" id="PF00176">
    <property type="entry name" value="SNF2-rel_dom"/>
    <property type="match status" value="1"/>
</dbReference>
<dbReference type="SMART" id="SM00487">
    <property type="entry name" value="DEXDc"/>
    <property type="match status" value="1"/>
</dbReference>
<dbReference type="SMART" id="SM00490">
    <property type="entry name" value="HELICc"/>
    <property type="match status" value="1"/>
</dbReference>
<dbReference type="SUPFAM" id="SSF52540">
    <property type="entry name" value="P-loop containing nucleoside triphosphate hydrolases"/>
    <property type="match status" value="2"/>
</dbReference>
<dbReference type="PROSITE" id="PS51192">
    <property type="entry name" value="HELICASE_ATP_BIND_1"/>
    <property type="match status" value="1"/>
</dbReference>
<dbReference type="PROSITE" id="PS51194">
    <property type="entry name" value="HELICASE_CTER"/>
    <property type="match status" value="1"/>
</dbReference>